<name>RL18_BORBZ</name>
<reference key="1">
    <citation type="journal article" date="2011" name="J. Bacteriol.">
        <title>Whole-genome sequences of thirteen isolates of Borrelia burgdorferi.</title>
        <authorList>
            <person name="Schutzer S.E."/>
            <person name="Fraser-Liggett C.M."/>
            <person name="Casjens S.R."/>
            <person name="Qiu W.G."/>
            <person name="Dunn J.J."/>
            <person name="Mongodin E.F."/>
            <person name="Luft B.J."/>
        </authorList>
    </citation>
    <scope>NUCLEOTIDE SEQUENCE [LARGE SCALE GENOMIC DNA]</scope>
    <source>
        <strain>ZS7</strain>
    </source>
</reference>
<organism>
    <name type="scientific">Borreliella burgdorferi (strain ZS7)</name>
    <name type="common">Borrelia burgdorferi</name>
    <dbReference type="NCBI Taxonomy" id="445985"/>
    <lineage>
        <taxon>Bacteria</taxon>
        <taxon>Pseudomonadati</taxon>
        <taxon>Spirochaetota</taxon>
        <taxon>Spirochaetia</taxon>
        <taxon>Spirochaetales</taxon>
        <taxon>Borreliaceae</taxon>
        <taxon>Borreliella</taxon>
    </lineage>
</organism>
<gene>
    <name evidence="1" type="primary">rplR</name>
    <name type="ordered locus">BbuZS7_0505</name>
</gene>
<comment type="function">
    <text evidence="1">This is one of the proteins that bind and probably mediate the attachment of the 5S RNA into the large ribosomal subunit, where it forms part of the central protuberance.</text>
</comment>
<comment type="subunit">
    <text evidence="1">Part of the 50S ribosomal subunit; part of the 5S rRNA/L5/L18/L25 subcomplex. Contacts the 5S and 23S rRNAs.</text>
</comment>
<comment type="similarity">
    <text evidence="1">Belongs to the universal ribosomal protein uL18 family.</text>
</comment>
<proteinExistence type="inferred from homology"/>
<dbReference type="EMBL" id="CP001205">
    <property type="protein sequence ID" value="ACK74744.1"/>
    <property type="molecule type" value="Genomic_DNA"/>
</dbReference>
<dbReference type="RefSeq" id="WP_002657971.1">
    <property type="nucleotide sequence ID" value="NC_011728.1"/>
</dbReference>
<dbReference type="SMR" id="B7J259"/>
<dbReference type="GeneID" id="56567929"/>
<dbReference type="KEGG" id="bbz:BbuZS7_0505"/>
<dbReference type="HOGENOM" id="CLU_098841_0_1_12"/>
<dbReference type="Proteomes" id="UP000006901">
    <property type="component" value="Chromosome"/>
</dbReference>
<dbReference type="GO" id="GO:0022625">
    <property type="term" value="C:cytosolic large ribosomal subunit"/>
    <property type="evidence" value="ECO:0007669"/>
    <property type="project" value="TreeGrafter"/>
</dbReference>
<dbReference type="GO" id="GO:0008097">
    <property type="term" value="F:5S rRNA binding"/>
    <property type="evidence" value="ECO:0007669"/>
    <property type="project" value="TreeGrafter"/>
</dbReference>
<dbReference type="GO" id="GO:0003735">
    <property type="term" value="F:structural constituent of ribosome"/>
    <property type="evidence" value="ECO:0007669"/>
    <property type="project" value="InterPro"/>
</dbReference>
<dbReference type="GO" id="GO:0006412">
    <property type="term" value="P:translation"/>
    <property type="evidence" value="ECO:0007669"/>
    <property type="project" value="UniProtKB-UniRule"/>
</dbReference>
<dbReference type="CDD" id="cd00432">
    <property type="entry name" value="Ribosomal_L18_L5e"/>
    <property type="match status" value="1"/>
</dbReference>
<dbReference type="FunFam" id="3.30.420.100:FF:000001">
    <property type="entry name" value="50S ribosomal protein L18"/>
    <property type="match status" value="1"/>
</dbReference>
<dbReference type="Gene3D" id="3.30.420.100">
    <property type="match status" value="1"/>
</dbReference>
<dbReference type="HAMAP" id="MF_01337_B">
    <property type="entry name" value="Ribosomal_uL18_B"/>
    <property type="match status" value="1"/>
</dbReference>
<dbReference type="InterPro" id="IPR004389">
    <property type="entry name" value="Ribosomal_uL18_bac-type"/>
</dbReference>
<dbReference type="InterPro" id="IPR005484">
    <property type="entry name" value="Ribosomal_uL18_bac/euk"/>
</dbReference>
<dbReference type="NCBIfam" id="TIGR00060">
    <property type="entry name" value="L18_bact"/>
    <property type="match status" value="1"/>
</dbReference>
<dbReference type="PANTHER" id="PTHR12899">
    <property type="entry name" value="39S RIBOSOMAL PROTEIN L18, MITOCHONDRIAL"/>
    <property type="match status" value="1"/>
</dbReference>
<dbReference type="PANTHER" id="PTHR12899:SF3">
    <property type="entry name" value="LARGE RIBOSOMAL SUBUNIT PROTEIN UL18M"/>
    <property type="match status" value="1"/>
</dbReference>
<dbReference type="Pfam" id="PF00861">
    <property type="entry name" value="Ribosomal_L18p"/>
    <property type="match status" value="1"/>
</dbReference>
<dbReference type="SUPFAM" id="SSF53137">
    <property type="entry name" value="Translational machinery components"/>
    <property type="match status" value="1"/>
</dbReference>
<accession>B7J259</accession>
<keyword id="KW-0687">Ribonucleoprotein</keyword>
<keyword id="KW-0689">Ribosomal protein</keyword>
<keyword id="KW-0694">RNA-binding</keyword>
<keyword id="KW-0699">rRNA-binding</keyword>
<sequence>MKKIKEAEQRKLRRKKRIKDKIGRGVASRPRITVFKSNRYFYAQVIDDSKGHTIASISTIEKSLNLGKNIDDVKKLGEVLAKRLKEKNINNLIFDRNGYKYHGLIASFATSLREFGINI</sequence>
<feature type="chain" id="PRO_1000142623" description="Large ribosomal subunit protein uL18">
    <location>
        <begin position="1"/>
        <end position="119"/>
    </location>
</feature>
<feature type="region of interest" description="Disordered" evidence="2">
    <location>
        <begin position="1"/>
        <end position="20"/>
    </location>
</feature>
<feature type="compositionally biased region" description="Basic and acidic residues" evidence="2">
    <location>
        <begin position="1"/>
        <end position="10"/>
    </location>
</feature>
<protein>
    <recommendedName>
        <fullName evidence="1">Large ribosomal subunit protein uL18</fullName>
    </recommendedName>
    <alternativeName>
        <fullName evidence="3">50S ribosomal protein L18</fullName>
    </alternativeName>
</protein>
<evidence type="ECO:0000255" key="1">
    <source>
        <dbReference type="HAMAP-Rule" id="MF_01337"/>
    </source>
</evidence>
<evidence type="ECO:0000256" key="2">
    <source>
        <dbReference type="SAM" id="MobiDB-lite"/>
    </source>
</evidence>
<evidence type="ECO:0000305" key="3"/>